<comment type="subcellular location">
    <subcellularLocation>
        <location evidence="1">Cytoplasm</location>
    </subcellularLocation>
</comment>
<comment type="similarity">
    <text evidence="1">Belongs to the TACO1 family.</text>
</comment>
<reference key="1">
    <citation type="journal article" date="2005" name="Science">
        <title>Genome sequence of the PCE-dechlorinating bacterium Dehalococcoides ethenogenes.</title>
        <authorList>
            <person name="Seshadri R."/>
            <person name="Adrian L."/>
            <person name="Fouts D.E."/>
            <person name="Eisen J.A."/>
            <person name="Phillippy A.M."/>
            <person name="Methe B.A."/>
            <person name="Ward N.L."/>
            <person name="Nelson W.C."/>
            <person name="DeBoy R.T."/>
            <person name="Khouri H.M."/>
            <person name="Kolonay J.F."/>
            <person name="Dodson R.J."/>
            <person name="Daugherty S.C."/>
            <person name="Brinkac L.M."/>
            <person name="Sullivan S.A."/>
            <person name="Madupu R."/>
            <person name="Nelson K.E."/>
            <person name="Kang K.H."/>
            <person name="Impraim M."/>
            <person name="Tran K."/>
            <person name="Robinson J.M."/>
            <person name="Forberger H.A."/>
            <person name="Fraser C.M."/>
            <person name="Zinder S.H."/>
            <person name="Heidelberg J.F."/>
        </authorList>
    </citation>
    <scope>NUCLEOTIDE SEQUENCE [LARGE SCALE GENOMIC DNA]</scope>
    <source>
        <strain>ATCC BAA-2266 / KCTC 15142 / 195</strain>
    </source>
</reference>
<gene>
    <name type="ordered locus">DET0444</name>
</gene>
<proteinExistence type="inferred from homology"/>
<evidence type="ECO:0000255" key="1">
    <source>
        <dbReference type="HAMAP-Rule" id="MF_00693"/>
    </source>
</evidence>
<accession>Q3Z9B1</accession>
<name>Y444_DEHM1</name>
<keyword id="KW-0963">Cytoplasm</keyword>
<keyword id="KW-0238">DNA-binding</keyword>
<keyword id="KW-0804">Transcription</keyword>
<keyword id="KW-0805">Transcription regulation</keyword>
<feature type="chain" id="PRO_0000257055" description="Probable transcriptional regulatory protein DET0444">
    <location>
        <begin position="1"/>
        <end position="251"/>
    </location>
</feature>
<organism>
    <name type="scientific">Dehalococcoides mccartyi (strain ATCC BAA-2266 / KCTC 15142 / 195)</name>
    <name type="common">Dehalococcoides ethenogenes (strain 195)</name>
    <dbReference type="NCBI Taxonomy" id="243164"/>
    <lineage>
        <taxon>Bacteria</taxon>
        <taxon>Bacillati</taxon>
        <taxon>Chloroflexota</taxon>
        <taxon>Dehalococcoidia</taxon>
        <taxon>Dehalococcoidales</taxon>
        <taxon>Dehalococcoidaceae</taxon>
        <taxon>Dehalococcoides</taxon>
    </lineage>
</organism>
<sequence length="251" mass="27280">MSGHSKWATIKHAKGAADAKRGQLFTKLSREIIFAAKQGGPSPEGNARLRLAIQKAKDNRMPSDNIERAIKKGSGELEGATVIEIILEGYGPGGVAVLVNGMSDNRNRTVSDVRHMFSKSGGSLAESGAVSWIFETKGVIGVETVGLDTDELSLKAIDMGAEDVNIEEDYMEIYTAMPDMEKVRQQLEAQGVTVDSAEINMIPKNTVKLDEETSLQVLKLLDKLEELDDVQTVSSNADFDPEVVEKYHSQA</sequence>
<dbReference type="EMBL" id="CP000027">
    <property type="protein sequence ID" value="AAW40251.1"/>
    <property type="molecule type" value="Genomic_DNA"/>
</dbReference>
<dbReference type="RefSeq" id="WP_010936221.1">
    <property type="nucleotide sequence ID" value="NC_002936.3"/>
</dbReference>
<dbReference type="SMR" id="Q3Z9B1"/>
<dbReference type="FunCoup" id="Q3Z9B1">
    <property type="interactions" value="308"/>
</dbReference>
<dbReference type="STRING" id="243164.DET0444"/>
<dbReference type="GeneID" id="3230215"/>
<dbReference type="KEGG" id="det:DET0444"/>
<dbReference type="PATRIC" id="fig|243164.10.peg.422"/>
<dbReference type="eggNOG" id="COG0217">
    <property type="taxonomic scope" value="Bacteria"/>
</dbReference>
<dbReference type="HOGENOM" id="CLU_062974_2_2_0"/>
<dbReference type="InParanoid" id="Q3Z9B1"/>
<dbReference type="Proteomes" id="UP000008289">
    <property type="component" value="Chromosome"/>
</dbReference>
<dbReference type="GO" id="GO:0005829">
    <property type="term" value="C:cytosol"/>
    <property type="evidence" value="ECO:0007669"/>
    <property type="project" value="TreeGrafter"/>
</dbReference>
<dbReference type="GO" id="GO:0003677">
    <property type="term" value="F:DNA binding"/>
    <property type="evidence" value="ECO:0007669"/>
    <property type="project" value="UniProtKB-UniRule"/>
</dbReference>
<dbReference type="GO" id="GO:0006355">
    <property type="term" value="P:regulation of DNA-templated transcription"/>
    <property type="evidence" value="ECO:0007669"/>
    <property type="project" value="UniProtKB-UniRule"/>
</dbReference>
<dbReference type="FunFam" id="1.10.10.200:FF:000002">
    <property type="entry name" value="Probable transcriptional regulatory protein CLM62_37755"/>
    <property type="match status" value="1"/>
</dbReference>
<dbReference type="FunFam" id="3.30.70.980:FF:000002">
    <property type="entry name" value="Probable transcriptional regulatory protein YebC"/>
    <property type="match status" value="1"/>
</dbReference>
<dbReference type="Gene3D" id="1.10.10.200">
    <property type="match status" value="1"/>
</dbReference>
<dbReference type="Gene3D" id="3.30.70.980">
    <property type="match status" value="2"/>
</dbReference>
<dbReference type="HAMAP" id="MF_00693">
    <property type="entry name" value="Transcrip_reg_TACO1"/>
    <property type="match status" value="1"/>
</dbReference>
<dbReference type="InterPro" id="IPR017856">
    <property type="entry name" value="Integrase-like_N"/>
</dbReference>
<dbReference type="InterPro" id="IPR048300">
    <property type="entry name" value="TACO1_YebC-like_2nd/3rd_dom"/>
</dbReference>
<dbReference type="InterPro" id="IPR049083">
    <property type="entry name" value="TACO1_YebC_N"/>
</dbReference>
<dbReference type="InterPro" id="IPR002876">
    <property type="entry name" value="Transcrip_reg_TACO1-like"/>
</dbReference>
<dbReference type="InterPro" id="IPR026564">
    <property type="entry name" value="Transcrip_reg_TACO1-like_dom3"/>
</dbReference>
<dbReference type="InterPro" id="IPR029072">
    <property type="entry name" value="YebC-like"/>
</dbReference>
<dbReference type="NCBIfam" id="NF001030">
    <property type="entry name" value="PRK00110.1"/>
    <property type="match status" value="1"/>
</dbReference>
<dbReference type="NCBIfam" id="NF009044">
    <property type="entry name" value="PRK12378.1"/>
    <property type="match status" value="1"/>
</dbReference>
<dbReference type="NCBIfam" id="TIGR01033">
    <property type="entry name" value="YebC/PmpR family DNA-binding transcriptional regulator"/>
    <property type="match status" value="1"/>
</dbReference>
<dbReference type="PANTHER" id="PTHR12532:SF6">
    <property type="entry name" value="TRANSCRIPTIONAL REGULATORY PROTEIN YEBC-RELATED"/>
    <property type="match status" value="1"/>
</dbReference>
<dbReference type="PANTHER" id="PTHR12532">
    <property type="entry name" value="TRANSLATIONAL ACTIVATOR OF CYTOCHROME C OXIDASE 1"/>
    <property type="match status" value="1"/>
</dbReference>
<dbReference type="Pfam" id="PF20772">
    <property type="entry name" value="TACO1_YebC_N"/>
    <property type="match status" value="1"/>
</dbReference>
<dbReference type="Pfam" id="PF01709">
    <property type="entry name" value="Transcrip_reg"/>
    <property type="match status" value="1"/>
</dbReference>
<dbReference type="SUPFAM" id="SSF75625">
    <property type="entry name" value="YebC-like"/>
    <property type="match status" value="1"/>
</dbReference>
<protein>
    <recommendedName>
        <fullName evidence="1">Probable transcriptional regulatory protein DET0444</fullName>
    </recommendedName>
</protein>